<feature type="chain" id="PRO_0000460642" description="Secreted LysM effector Vd5LysM">
    <location>
        <begin position="1"/>
        <end position="690"/>
    </location>
</feature>
<feature type="domain" description="LysM 1" evidence="2">
    <location>
        <begin position="203"/>
        <end position="248"/>
    </location>
</feature>
<feature type="domain" description="LysM 2" evidence="2">
    <location>
        <begin position="253"/>
        <end position="301"/>
    </location>
</feature>
<feature type="domain" description="LysM 3" evidence="2">
    <location>
        <begin position="341"/>
        <end position="387"/>
    </location>
</feature>
<feature type="domain" description="LysM 4" evidence="2">
    <location>
        <begin position="549"/>
        <end position="596"/>
    </location>
</feature>
<feature type="domain" description="LysM 5" evidence="2">
    <location>
        <begin position="639"/>
        <end position="686"/>
    </location>
</feature>
<feature type="region of interest" description="Disordered" evidence="3">
    <location>
        <begin position="523"/>
        <end position="546"/>
    </location>
</feature>
<feature type="region of interest" description="Disordered" evidence="3">
    <location>
        <begin position="606"/>
        <end position="636"/>
    </location>
</feature>
<feature type="compositionally biased region" description="Low complexity" evidence="3">
    <location>
        <begin position="606"/>
        <end position="619"/>
    </location>
</feature>
<feature type="glycosylation site" description="N-linked (GlcNAc...) asparagine" evidence="1">
    <location>
        <position position="4"/>
    </location>
</feature>
<feature type="glycosylation site" description="N-linked (GlcNAc...) asparagine" evidence="1">
    <location>
        <position position="69"/>
    </location>
</feature>
<feature type="glycosylation site" description="N-linked (GlcNAc...) asparagine" evidence="1">
    <location>
        <position position="260"/>
    </location>
</feature>
<feature type="glycosylation site" description="N-linked (GlcNAc...) asparagine" evidence="1">
    <location>
        <position position="295"/>
    </location>
</feature>
<feature type="glycosylation site" description="N-linked (GlcNAc...) asparagine" evidence="1">
    <location>
        <position position="375"/>
    </location>
</feature>
<feature type="glycosylation site" description="N-linked (GlcNAc...) asparagine" evidence="1">
    <location>
        <position position="410"/>
    </location>
</feature>
<feature type="glycosylation site" description="N-linked (GlcNAc...) asparagine" evidence="1">
    <location>
        <position position="423"/>
    </location>
</feature>
<feature type="glycosylation site" description="N-linked (GlcNAc...) asparagine" evidence="1">
    <location>
        <position position="492"/>
    </location>
</feature>
<name>LYSM5_VERDV</name>
<proteinExistence type="inferred from homology"/>
<evidence type="ECO:0000255" key="1">
    <source>
        <dbReference type="PROSITE-ProRule" id="PRU00498"/>
    </source>
</evidence>
<evidence type="ECO:0000255" key="2">
    <source>
        <dbReference type="PROSITE-ProRule" id="PRU01118"/>
    </source>
</evidence>
<evidence type="ECO:0000256" key="3">
    <source>
        <dbReference type="SAM" id="MobiDB-lite"/>
    </source>
</evidence>
<evidence type="ECO:0000269" key="4">
    <source>
    </source>
</evidence>
<evidence type="ECO:0000303" key="5">
    <source>
    </source>
</evidence>
<evidence type="ECO:0000305" key="6"/>
<evidence type="ECO:0000305" key="7">
    <source>
    </source>
</evidence>
<sequence>MIYNESLPDNLPSLCSKALLADVPCDRLVRDLRPDFFYRPASLERMCTSGCAAALSSWTSSVRSACGKNVSVPTDFDLLASPVVIPATLEHTFEFTCLRENNKFCGPVAALAAVFTDPGVSPFNYLSEAPEGTTDPGRCDSCIAARLRMRAGSPYFDGPIVASESLYQRLTSSCGITGKPVTTTTIDYSISEPEPTEDSCDGTQYTIQNTDDCYSISKAQGVATAWLLADNGLAAYCADFPTSGSLCIANKCDTVTVGVNQTCIAIANSAGITVTQLKAWNQVINPVCSNIGMMNGTTLCISPPGPRLPLPGTTDIPPLVPTTAAPVPTDAAAGSNKPCSRWYNVEAGDYCNLVILKFAISLDDFLFLNPGINANCTNLYAKESYCVHPVGDINTYAGRPGHVSITIDPNATFTGIPFTMLPNATVKGYSRPYTPAPLAKGVREDCVHYFKGDDYQFPPDQLGYWKSNCELAARNYGADNDNFVAWNALGTNVTDPSCSFVPGGRYCGSWNSQVVRTITETEPATATTGDGGPTPPAPTHSGQPQDCDTWHVVSSGDSCQSVADDAGISRDQFHDWNPAVGRDCSTNFWLGQAYCVGVSEDMGDMSTVASSTTSSVTPGPSKPEPPGPTHTGQPSDCDEWDVVETGDTCGSLAESNDISLSQFFDWNPAVSRDCVANFWIGQAYCIGVSS</sequence>
<comment type="function">
    <text evidence="4 7">Might have a role in sequestration of chitin oligosaccharides (breakdown products of fungal cell walls that are released during invasion and act as triggers of host immunity) to dampen host defense (Probable). Does not play an important role during host colonization (PubMed:27911046).</text>
</comment>
<comment type="domain">
    <text evidence="7">The LysM (lysin motif) domains are small globular domains involved in binding chitin in eukaryotes. Vd5LysM contains 5 LysM domains.</text>
</comment>
<comment type="disruption phenotype">
    <text evidence="4">Does not affect virulence on Arabidopsis, N.benthamiana and tomato.</text>
</comment>
<comment type="miscellaneous">
    <text evidence="6">In plants, chitin acts as a microbe-associated molecular pattern (MAMP) that is recognized by lysin motif (LysM)-containing plant cell surface-localized pattern recognition receptors (PRRs) that activate a plethora of downstream immune responses.</text>
</comment>
<comment type="similarity">
    <text evidence="6">Belongs to the secreted LysM effector family.</text>
</comment>
<reference key="1">
    <citation type="journal article" date="2011" name="PLoS Pathog.">
        <title>Comparative genomics yields insights into niche adaptation of plant vascular wilt pathogens.</title>
        <authorList>
            <person name="Klosterman S.J."/>
            <person name="Subbarao K.V."/>
            <person name="Kang S."/>
            <person name="Veronese P."/>
            <person name="Gold S.E."/>
            <person name="Thomma B.P.H.J."/>
            <person name="Chen Z."/>
            <person name="Henrissat B."/>
            <person name="Lee Y.-H."/>
            <person name="Park J."/>
            <person name="Garcia-Pedrajas M.D."/>
            <person name="Barbara D.J."/>
            <person name="Anchieta A."/>
            <person name="de Jonge R."/>
            <person name="Santhanam P."/>
            <person name="Maruthachalam K."/>
            <person name="Atallah Z."/>
            <person name="Amyotte S.G."/>
            <person name="Paz Z."/>
            <person name="Inderbitzin P."/>
            <person name="Hayes R.J."/>
            <person name="Heiman D.I."/>
            <person name="Young S."/>
            <person name="Zeng Q."/>
            <person name="Engels R."/>
            <person name="Galagan J."/>
            <person name="Cuomo C.A."/>
            <person name="Dobinson K.F."/>
            <person name="Ma L.-J."/>
        </authorList>
    </citation>
    <scope>NUCLEOTIDE SEQUENCE [LARGE SCALE GENOMIC DNA]</scope>
    <source>
        <strain>VdLs.17 / ATCC MYA-4575 / FGSC 10137</strain>
    </source>
</reference>
<reference key="2">
    <citation type="journal article" date="2017" name="Mol. Plant Pathol.">
        <title>Verticillium dahliae LysM effectors differentially contribute to virulence on plant hosts.</title>
        <authorList>
            <person name="Kombrink A."/>
            <person name="Rovenich H."/>
            <person name="Shi-Kunne X."/>
            <person name="Rojas-Padilla E."/>
            <person name="van den Berg G.C."/>
            <person name="Domazakis E."/>
            <person name="de Jonge R."/>
            <person name="Valkenburg D.J."/>
            <person name="Sanchez-Vallet A."/>
            <person name="Seidl M.F."/>
            <person name="Thomma B.P."/>
        </authorList>
    </citation>
    <scope>FUNCTION</scope>
    <scope>DOMAIN</scope>
    <scope>DISRUPTION PHENOTYPE</scope>
</reference>
<keyword id="KW-0147">Chitin-binding</keyword>
<keyword id="KW-0325">Glycoprotein</keyword>
<keyword id="KW-1185">Reference proteome</keyword>
<keyword id="KW-0677">Repeat</keyword>
<keyword id="KW-0843">Virulence</keyword>
<accession>G2X444</accession>
<organism>
    <name type="scientific">Verticillium dahliae (strain VdLs.17 / ATCC MYA-4575 / FGSC 10137)</name>
    <name type="common">Verticillium wilt</name>
    <dbReference type="NCBI Taxonomy" id="498257"/>
    <lineage>
        <taxon>Eukaryota</taxon>
        <taxon>Fungi</taxon>
        <taxon>Dikarya</taxon>
        <taxon>Ascomycota</taxon>
        <taxon>Pezizomycotina</taxon>
        <taxon>Sordariomycetes</taxon>
        <taxon>Hypocreomycetidae</taxon>
        <taxon>Glomerellales</taxon>
        <taxon>Plectosphaerellaceae</taxon>
        <taxon>Verticillium</taxon>
    </lineage>
</organism>
<protein>
    <recommendedName>
        <fullName evidence="5">Secreted LysM effector Vd5LysM</fullName>
    </recommendedName>
    <alternativeName>
        <fullName evidence="5">Five LysM domain-containing protein</fullName>
    </alternativeName>
    <alternativeName>
        <fullName evidence="5">LysM domain-containing protein Vd5LysM</fullName>
    </alternativeName>
</protein>
<gene>
    <name evidence="5" type="primary">Vd5LysM</name>
    <name type="ORF">VDAG_04781</name>
</gene>
<dbReference type="EMBL" id="DS572702">
    <property type="protein sequence ID" value="EGY23343.1"/>
    <property type="molecule type" value="Genomic_DNA"/>
</dbReference>
<dbReference type="RefSeq" id="XP_009652680.1">
    <property type="nucleotide sequence ID" value="XM_009654385.1"/>
</dbReference>
<dbReference type="STRING" id="498257.G2X444"/>
<dbReference type="EnsemblFungi" id="EGY23343">
    <property type="protein sequence ID" value="EGY23343"/>
    <property type="gene ID" value="VDAG_04781"/>
</dbReference>
<dbReference type="GeneID" id="20706244"/>
<dbReference type="KEGG" id="vda:VDAG_04781"/>
<dbReference type="eggNOG" id="KOG2806">
    <property type="taxonomic scope" value="Eukaryota"/>
</dbReference>
<dbReference type="HOGENOM" id="CLU_010591_5_0_1"/>
<dbReference type="InParanoid" id="G2X444"/>
<dbReference type="OMA" id="AYCVGRS"/>
<dbReference type="OrthoDB" id="56167at1028384"/>
<dbReference type="PHI-base" id="PHI:6832"/>
<dbReference type="Proteomes" id="UP000001611">
    <property type="component" value="Chromosome 3"/>
</dbReference>
<dbReference type="GO" id="GO:0008061">
    <property type="term" value="F:chitin binding"/>
    <property type="evidence" value="ECO:0007669"/>
    <property type="project" value="UniProtKB-KW"/>
</dbReference>
<dbReference type="CDD" id="cd00118">
    <property type="entry name" value="LysM"/>
    <property type="match status" value="4"/>
</dbReference>
<dbReference type="Gene3D" id="3.10.350.10">
    <property type="entry name" value="LysM domain"/>
    <property type="match status" value="4"/>
</dbReference>
<dbReference type="InterPro" id="IPR052210">
    <property type="entry name" value="LysM1-like"/>
</dbReference>
<dbReference type="InterPro" id="IPR018392">
    <property type="entry name" value="LysM_dom"/>
</dbReference>
<dbReference type="InterPro" id="IPR036779">
    <property type="entry name" value="LysM_dom_sf"/>
</dbReference>
<dbReference type="PANTHER" id="PTHR34997">
    <property type="entry name" value="AM15"/>
    <property type="match status" value="1"/>
</dbReference>
<dbReference type="PANTHER" id="PTHR34997:SF1">
    <property type="entry name" value="PEPTIDOGLYCAN-BINDING LYSIN DOMAIN"/>
    <property type="match status" value="1"/>
</dbReference>
<dbReference type="Pfam" id="PF01476">
    <property type="entry name" value="LysM"/>
    <property type="match status" value="4"/>
</dbReference>
<dbReference type="SMART" id="SM00257">
    <property type="entry name" value="LysM"/>
    <property type="match status" value="4"/>
</dbReference>
<dbReference type="SUPFAM" id="SSF54106">
    <property type="entry name" value="LysM domain"/>
    <property type="match status" value="2"/>
</dbReference>
<dbReference type="PROSITE" id="PS51782">
    <property type="entry name" value="LYSM"/>
    <property type="match status" value="4"/>
</dbReference>